<evidence type="ECO:0000255" key="1">
    <source>
        <dbReference type="HAMAP-Rule" id="MF_01342"/>
    </source>
</evidence>
<evidence type="ECO:0000305" key="2"/>
<dbReference type="EMBL" id="Z11874">
    <property type="protein sequence ID" value="CAA77922.1"/>
    <property type="molecule type" value="Genomic_DNA"/>
</dbReference>
<dbReference type="EMBL" id="X70810">
    <property type="protein sequence ID" value="CAA50105.1"/>
    <property type="molecule type" value="Genomic_DNA"/>
</dbReference>
<dbReference type="PIR" id="S09286">
    <property type="entry name" value="R5EG16"/>
</dbReference>
<dbReference type="RefSeq" id="NP_041918.1">
    <property type="nucleotide sequence ID" value="NC_001603.2"/>
</dbReference>
<dbReference type="SMR" id="P21512"/>
<dbReference type="GeneID" id="807522"/>
<dbReference type="GO" id="GO:0009507">
    <property type="term" value="C:chloroplast"/>
    <property type="evidence" value="ECO:0007669"/>
    <property type="project" value="UniProtKB-SubCell"/>
</dbReference>
<dbReference type="GO" id="GO:0005762">
    <property type="term" value="C:mitochondrial large ribosomal subunit"/>
    <property type="evidence" value="ECO:0007669"/>
    <property type="project" value="TreeGrafter"/>
</dbReference>
<dbReference type="GO" id="GO:0019843">
    <property type="term" value="F:rRNA binding"/>
    <property type="evidence" value="ECO:0007669"/>
    <property type="project" value="InterPro"/>
</dbReference>
<dbReference type="GO" id="GO:0003735">
    <property type="term" value="F:structural constituent of ribosome"/>
    <property type="evidence" value="ECO:0007669"/>
    <property type="project" value="InterPro"/>
</dbReference>
<dbReference type="GO" id="GO:0032543">
    <property type="term" value="P:mitochondrial translation"/>
    <property type="evidence" value="ECO:0007669"/>
    <property type="project" value="TreeGrafter"/>
</dbReference>
<dbReference type="CDD" id="cd01433">
    <property type="entry name" value="Ribosomal_L16_L10e"/>
    <property type="match status" value="1"/>
</dbReference>
<dbReference type="FunFam" id="3.90.1170.10:FF:000001">
    <property type="entry name" value="50S ribosomal protein L16"/>
    <property type="match status" value="1"/>
</dbReference>
<dbReference type="Gene3D" id="3.90.1170.10">
    <property type="entry name" value="Ribosomal protein L10e/L16"/>
    <property type="match status" value="1"/>
</dbReference>
<dbReference type="HAMAP" id="MF_01342">
    <property type="entry name" value="Ribosomal_uL16"/>
    <property type="match status" value="1"/>
</dbReference>
<dbReference type="InterPro" id="IPR047873">
    <property type="entry name" value="Ribosomal_uL16"/>
</dbReference>
<dbReference type="InterPro" id="IPR000114">
    <property type="entry name" value="Ribosomal_uL16_bact-type"/>
</dbReference>
<dbReference type="InterPro" id="IPR020798">
    <property type="entry name" value="Ribosomal_uL16_CS"/>
</dbReference>
<dbReference type="InterPro" id="IPR016180">
    <property type="entry name" value="Ribosomal_uL16_dom"/>
</dbReference>
<dbReference type="InterPro" id="IPR036920">
    <property type="entry name" value="Ribosomal_uL16_sf"/>
</dbReference>
<dbReference type="NCBIfam" id="TIGR01164">
    <property type="entry name" value="rplP_bact"/>
    <property type="match status" value="1"/>
</dbReference>
<dbReference type="PANTHER" id="PTHR12220">
    <property type="entry name" value="50S/60S RIBOSOMAL PROTEIN L16"/>
    <property type="match status" value="1"/>
</dbReference>
<dbReference type="PANTHER" id="PTHR12220:SF13">
    <property type="entry name" value="LARGE RIBOSOMAL SUBUNIT PROTEIN UL16M"/>
    <property type="match status" value="1"/>
</dbReference>
<dbReference type="Pfam" id="PF00252">
    <property type="entry name" value="Ribosomal_L16"/>
    <property type="match status" value="1"/>
</dbReference>
<dbReference type="PRINTS" id="PR00060">
    <property type="entry name" value="RIBOSOMALL16"/>
</dbReference>
<dbReference type="SUPFAM" id="SSF54686">
    <property type="entry name" value="Ribosomal protein L16p/L10e"/>
    <property type="match status" value="1"/>
</dbReference>
<dbReference type="PROSITE" id="PS00586">
    <property type="entry name" value="RIBOSOMAL_L16_1"/>
    <property type="match status" value="1"/>
</dbReference>
<dbReference type="PROSITE" id="PS00701">
    <property type="entry name" value="RIBOSOMAL_L16_2"/>
    <property type="match status" value="1"/>
</dbReference>
<geneLocation type="chloroplast"/>
<keyword id="KW-0150">Chloroplast</keyword>
<keyword id="KW-0934">Plastid</keyword>
<keyword id="KW-0687">Ribonucleoprotein</keyword>
<keyword id="KW-0689">Ribosomal protein</keyword>
<proteinExistence type="inferred from homology"/>
<comment type="subunit">
    <text evidence="1">Part of the 50S ribosomal subunit.</text>
</comment>
<comment type="subcellular location">
    <subcellularLocation>
        <location>Plastid</location>
        <location>Chloroplast</location>
    </subcellularLocation>
</comment>
<comment type="similarity">
    <text evidence="1">Belongs to the universal ribosomal protein uL16 family.</text>
</comment>
<feature type="chain" id="PRO_0000062282" description="Large ribosomal subunit protein uL16c">
    <location>
        <begin position="1"/>
        <end position="135"/>
    </location>
</feature>
<gene>
    <name evidence="1" type="primary">rpl16</name>
</gene>
<organism>
    <name type="scientific">Euglena gracilis</name>
    <dbReference type="NCBI Taxonomy" id="3039"/>
    <lineage>
        <taxon>Eukaryota</taxon>
        <taxon>Discoba</taxon>
        <taxon>Euglenozoa</taxon>
        <taxon>Euglenida</taxon>
        <taxon>Spirocuta</taxon>
        <taxon>Euglenophyceae</taxon>
        <taxon>Euglenales</taxon>
        <taxon>Euglenaceae</taxon>
        <taxon>Euglena</taxon>
    </lineage>
</organism>
<name>RK16_EUGGR</name>
<protein>
    <recommendedName>
        <fullName evidence="1">Large ribosomal subunit protein uL16c</fullName>
    </recommendedName>
    <alternativeName>
        <fullName evidence="2">50S ribosomal protein L16, chloroplastic</fullName>
    </alternativeName>
</protein>
<sequence length="135" mass="15603">MLSPKRTKFRKYHRGRLTGKIYLIDKVVFGNYALQSLEPGWITSRQIEAARRVITRYAKRGGKLWIRIFPDKPVTFRAAETRMGSRKGNVEYWVAIVKPGKILYEVLGISESIAKYSLKIAGYKMPIKTRVIVKI</sequence>
<reference key="1">
    <citation type="journal article" date="1989" name="Nucleic Acids Res.">
        <title>Euglena gracilis chloroplast ribosomal protein operon: a new chloroplast gene for ribosomal protein L5 and description of a novel organelle intron category designated group III.</title>
        <authorList>
            <person name="Christopher D.A."/>
            <person name="Hallick R.B."/>
        </authorList>
    </citation>
    <scope>NUCLEOTIDE SEQUENCE [GENOMIC DNA]</scope>
    <source>
        <strain>Z / UTEX 753</strain>
    </source>
</reference>
<reference key="2">
    <citation type="journal article" date="1993" name="Nucleic Acids Res.">
        <title>Complete sequence of Euglena gracilis chloroplast DNA.</title>
        <authorList>
            <person name="Hallick R.B."/>
            <person name="Hong L."/>
            <person name="Drager R.G."/>
            <person name="Favreau M.R."/>
            <person name="Monfort A."/>
            <person name="Orsat B."/>
            <person name="Spielmann A."/>
            <person name="Stutz E."/>
        </authorList>
    </citation>
    <scope>NUCLEOTIDE SEQUENCE [LARGE SCALE GENOMIC DNA]</scope>
    <source>
        <strain>Z / UTEX 753</strain>
    </source>
</reference>
<accession>P21512</accession>